<gene>
    <name type="primary">spn-E</name>
    <name type="synonym">hls</name>
    <name type="ORF">GG16958</name>
</gene>
<name>SPNE_DROER</name>
<evidence type="ECO:0000250" key="1"/>
<evidence type="ECO:0000255" key="2">
    <source>
        <dbReference type="PROSITE-ProRule" id="PRU00211"/>
    </source>
</evidence>
<evidence type="ECO:0000255" key="3">
    <source>
        <dbReference type="PROSITE-ProRule" id="PRU00541"/>
    </source>
</evidence>
<evidence type="ECO:0000255" key="4">
    <source>
        <dbReference type="PROSITE-ProRule" id="PRU00542"/>
    </source>
</evidence>
<evidence type="ECO:0000305" key="5"/>
<sequence length="1432" mass="164345">MDQEVMDFFDFSKEFKREAAPQGYISSDPSIMATETNESKVPKREVIGTDYVPEIVAKEKCLLDRTLRDDCPQSKRNRTLDDLDTDDEGEETEIRRDDEYYKRYRFNLNRDKNLPIYAKREEILAAINAHPVVILKGQTGCGKTTQVPQYILDEGYKSGKYCNIVVTQPRRIAAISIANRVCQEREWQQDTVCSYQVGLHRPTSLEDTRLLYCTTGVLLNNLINKKTLTHYTHIVLDEVHERDQDMDFLLIVVRRLLATNSRHVKIILMSATIDARELADYFTTTNSVPPVITASHGRKHAIEKFYRDQMGSIRWKEEEDDQLVPQINDHGYRAAVKIIMVIDNMEREAAIQSRLSYDEALRYGAVLIFLPGIDEIDTMAENITSMLQSDRNIKVFIVRCFSLMTPENQRDVFHPPPPGFRKIILTTNIAESSITVPDVSYVIDFCLTKVLVTDTATSFSSLRLTWASKANCRQRAGRVGRLRSGRVYRMVNKSFYQREMAEFGIPEMLRMPLQNSVLRAKELEMGSPIEILALALSPPNLSDIQNTILLLKEVGALFLTVDGVYNAMDGDITYWGTIMSRLPLDTRLSRLIILGYVFNLLEEAIIIAAGLSMRGLYVNEGRRTQGADSFWMHYIFADGSGSDLVAIWRVYLTYLNMVEIAHEQESAIRWAKRFHVSLRSLKEMHLLVQELRWRCTNLGLIPFAVNPSQMMGDREKSIILKVIIAGAFYPNYFTRSKESCAEPDRNIYQTISGHDPCRTVYFTNFKPAYMGELYTRRIKELFQEARIPPENIDVTFQQGSQKVFVTFKQDDWLADSSKFVSVSGRVQSEVYKAVRMRLDRIQRPIRIMTQNNFMNYVQQRGIGDVIEGRWIPPTKPLNVELLALPSVFSKTITGLITCIISCGKFFFQPQSFAECIRNMSEIFNAPQQLRNYVINAGAITKGMMVLAKRDSNFQRATVIRPENQSNRQPMFYVRFIDYGDCALLSMQQLRLMPKELIQQYGDLPPRVFECRLAHVQPSSVVSGNNRWPTAANDLLKSVAKCGRIDIEVYSLFNNVAAVLIPMKDGIINDMLVELKLSRRSDEDYMSRKDHDFRLRRQESARYLTLTERQQINEEYLRSCQLPQDLDLPPPPLDKCNTIVMLKGPSSPLECSMQSIIRVGSSKRVNIDNASVNAVLLDADPQDHHDHLIVAHATVESTNGQTLTARGTTLMPNVQGFGALMVMLFCPTMQLKCNNEGTSYVSILAGLGCDPVTGEPYYAEHDVLINLDVNILEDDVVLINQIRYYIDSVFFNFKEEKDPAVSINERVSIYTQLRSLINRLLCKDRSYMQRNMSNSDFEWESNPELPMPNEPFGKRAIFPMHSLTELQEEDMGRLMHLRENCSMLHKWRNFEGTLPHMTCKLCNQLLESVPQLRLHLLTVLHRDREKQIDYCNQ</sequence>
<feature type="chain" id="PRO_0000391914" description="Probable ATP-dependent RNA helicase spindle-E">
    <location>
        <begin position="1"/>
        <end position="1432"/>
    </location>
</feature>
<feature type="domain" description="Helicase ATP-binding" evidence="3">
    <location>
        <begin position="124"/>
        <end position="291"/>
    </location>
</feature>
<feature type="domain" description="Helicase C-terminal" evidence="4">
    <location>
        <begin position="337"/>
        <end position="524"/>
    </location>
</feature>
<feature type="domain" description="Tudor" evidence="2">
    <location>
        <begin position="936"/>
        <end position="999"/>
    </location>
</feature>
<feature type="short sequence motif" description="DEAH box">
    <location>
        <begin position="237"/>
        <end position="240"/>
    </location>
</feature>
<feature type="binding site" evidence="3">
    <location>
        <begin position="137"/>
        <end position="144"/>
    </location>
    <ligand>
        <name>ATP</name>
        <dbReference type="ChEBI" id="CHEBI:30616"/>
    </ligand>
</feature>
<keyword id="KW-0067">ATP-binding</keyword>
<keyword id="KW-0963">Cytoplasm</keyword>
<keyword id="KW-0217">Developmental protein</keyword>
<keyword id="KW-0221">Differentiation</keyword>
<keyword id="KW-0347">Helicase</keyword>
<keyword id="KW-0378">Hydrolase</keyword>
<keyword id="KW-0469">Meiosis</keyword>
<keyword id="KW-0547">Nucleotide-binding</keyword>
<keyword id="KW-0896">Oogenesis</keyword>
<keyword id="KW-0943">RNA-mediated gene silencing</keyword>
<keyword id="KW-0744">Spermatogenesis</keyword>
<accession>B3P3W1</accession>
<protein>
    <recommendedName>
        <fullName>Probable ATP-dependent RNA helicase spindle-E</fullName>
        <ecNumber>3.6.4.13</ecNumber>
    </recommendedName>
    <alternativeName>
        <fullName>Homeless</fullName>
    </alternativeName>
</protein>
<comment type="function">
    <text evidence="1">Probable ATP-binding RNA helicase which plays a central role during spermatogenesis and oogenesis by repressing transposable elements and preventing their mobilization, which is essential for the germline integrity. Acts via the piRNA metabolic process, which mediates the repression of transposable elements during meiosis by forming complexes composed of piRNAs and Piwi and govern the methylation and subsequent repression of transposons. Involved in the repression of LTR retrotransposon copia. Also involved in telomere regulation by repressing specialized telomeric retroelements HeT-A, TAHRE, and TART; Drosophila telomeres being maintained by transposition of specialized telomeric retroelements. Involved in telomeric trans-silencing, a repression mechanism by which a transposon or a transgene inserted in subtelomeric heterochromatin has the capacity to repress in trans in the female germline, a homologous transposon, or transgene located in euchromatin. Involved in the repression of testis-expressed Stellate genes by the homologous Su(Ste) repeats. Required for anteroposterior and dorsoventral axis formation during oogenesis (By similarity).</text>
</comment>
<comment type="catalytic activity">
    <reaction>
        <text>ATP + H2O = ADP + phosphate + H(+)</text>
        <dbReference type="Rhea" id="RHEA:13065"/>
        <dbReference type="ChEBI" id="CHEBI:15377"/>
        <dbReference type="ChEBI" id="CHEBI:15378"/>
        <dbReference type="ChEBI" id="CHEBI:30616"/>
        <dbReference type="ChEBI" id="CHEBI:43474"/>
        <dbReference type="ChEBI" id="CHEBI:456216"/>
        <dbReference type="EC" id="3.6.4.13"/>
    </reaction>
</comment>
<comment type="subcellular location">
    <subcellularLocation>
        <location evidence="1">Cytoplasm</location>
    </subcellularLocation>
    <text evidence="1">Component of the nuage, also named P granule, a germ-cell-specific organelle required to repress transposon during meiosis.</text>
</comment>
<comment type="similarity">
    <text evidence="5">Belongs to the DEAD box helicase family. DEAH subfamily.</text>
</comment>
<organism>
    <name type="scientific">Drosophila erecta</name>
    <name type="common">Fruit fly</name>
    <dbReference type="NCBI Taxonomy" id="7220"/>
    <lineage>
        <taxon>Eukaryota</taxon>
        <taxon>Metazoa</taxon>
        <taxon>Ecdysozoa</taxon>
        <taxon>Arthropoda</taxon>
        <taxon>Hexapoda</taxon>
        <taxon>Insecta</taxon>
        <taxon>Pterygota</taxon>
        <taxon>Neoptera</taxon>
        <taxon>Endopterygota</taxon>
        <taxon>Diptera</taxon>
        <taxon>Brachycera</taxon>
        <taxon>Muscomorpha</taxon>
        <taxon>Ephydroidea</taxon>
        <taxon>Drosophilidae</taxon>
        <taxon>Drosophila</taxon>
        <taxon>Sophophora</taxon>
    </lineage>
</organism>
<proteinExistence type="inferred from homology"/>
<dbReference type="EC" id="3.6.4.13"/>
<dbReference type="EMBL" id="CH954181">
    <property type="protein sequence ID" value="EDV49067.1"/>
    <property type="molecule type" value="Genomic_DNA"/>
</dbReference>
<dbReference type="SMR" id="B3P3W1"/>
<dbReference type="EnsemblMetazoa" id="FBtr0137012">
    <property type="protein sequence ID" value="FBpp0135504"/>
    <property type="gene ID" value="FBgn0109186"/>
</dbReference>
<dbReference type="EnsemblMetazoa" id="XM_001980073.3">
    <property type="protein sequence ID" value="XP_001980109.1"/>
    <property type="gene ID" value="LOC6553090"/>
</dbReference>
<dbReference type="GeneID" id="6553090"/>
<dbReference type="KEGG" id="der:6553090"/>
<dbReference type="eggNOG" id="KOG0920">
    <property type="taxonomic scope" value="Eukaryota"/>
</dbReference>
<dbReference type="HOGENOM" id="CLU_002601_1_0_1"/>
<dbReference type="OMA" id="ETRLTYC"/>
<dbReference type="OrthoDB" id="66977at2759"/>
<dbReference type="PhylomeDB" id="B3P3W1"/>
<dbReference type="Proteomes" id="UP000008711">
    <property type="component" value="Unassembled WGS sequence"/>
</dbReference>
<dbReference type="GO" id="GO:0005634">
    <property type="term" value="C:nucleus"/>
    <property type="evidence" value="ECO:0007669"/>
    <property type="project" value="EnsemblMetazoa"/>
</dbReference>
<dbReference type="GO" id="GO:0043186">
    <property type="term" value="C:P granule"/>
    <property type="evidence" value="ECO:0007669"/>
    <property type="project" value="EnsemblMetazoa"/>
</dbReference>
<dbReference type="GO" id="GO:0005524">
    <property type="term" value="F:ATP binding"/>
    <property type="evidence" value="ECO:0007669"/>
    <property type="project" value="UniProtKB-KW"/>
</dbReference>
<dbReference type="GO" id="GO:0016887">
    <property type="term" value="F:ATP hydrolysis activity"/>
    <property type="evidence" value="ECO:0007669"/>
    <property type="project" value="RHEA"/>
</dbReference>
<dbReference type="GO" id="GO:0003723">
    <property type="term" value="F:RNA binding"/>
    <property type="evidence" value="ECO:0007669"/>
    <property type="project" value="TreeGrafter"/>
</dbReference>
<dbReference type="GO" id="GO:0003724">
    <property type="term" value="F:RNA helicase activity"/>
    <property type="evidence" value="ECO:0007669"/>
    <property type="project" value="UniProtKB-EC"/>
</dbReference>
<dbReference type="GO" id="GO:0046843">
    <property type="term" value="P:dorsal appendage formation"/>
    <property type="evidence" value="ECO:0007669"/>
    <property type="project" value="EnsemblMetazoa"/>
</dbReference>
<dbReference type="GO" id="GO:0007294">
    <property type="term" value="P:germarium-derived oocyte fate determination"/>
    <property type="evidence" value="ECO:0007669"/>
    <property type="project" value="EnsemblMetazoa"/>
</dbReference>
<dbReference type="GO" id="GO:0098795">
    <property type="term" value="P:global gene silencing by mRNA cleavage"/>
    <property type="evidence" value="ECO:0007669"/>
    <property type="project" value="EnsemblMetazoa"/>
</dbReference>
<dbReference type="GO" id="GO:0031507">
    <property type="term" value="P:heterochromatin formation"/>
    <property type="evidence" value="ECO:0007669"/>
    <property type="project" value="EnsemblMetazoa"/>
</dbReference>
<dbReference type="GO" id="GO:0008298">
    <property type="term" value="P:intracellular mRNA localization"/>
    <property type="evidence" value="ECO:0007669"/>
    <property type="project" value="EnsemblMetazoa"/>
</dbReference>
<dbReference type="GO" id="GO:0007076">
    <property type="term" value="P:mitotic chromosome condensation"/>
    <property type="evidence" value="ECO:0007669"/>
    <property type="project" value="EnsemblMetazoa"/>
</dbReference>
<dbReference type="GO" id="GO:0030717">
    <property type="term" value="P:oocyte karyosome formation"/>
    <property type="evidence" value="ECO:0007669"/>
    <property type="project" value="EnsemblMetazoa"/>
</dbReference>
<dbReference type="GO" id="GO:0030720">
    <property type="term" value="P:oocyte localization involved in germarium-derived egg chamber formation"/>
    <property type="evidence" value="ECO:0007669"/>
    <property type="project" value="EnsemblMetazoa"/>
</dbReference>
<dbReference type="GO" id="GO:0001556">
    <property type="term" value="P:oocyte maturation"/>
    <property type="evidence" value="ECO:0007669"/>
    <property type="project" value="EnsemblMetazoa"/>
</dbReference>
<dbReference type="GO" id="GO:0009949">
    <property type="term" value="P:polarity specification of anterior/posterior axis"/>
    <property type="evidence" value="ECO:0007669"/>
    <property type="project" value="EnsemblMetazoa"/>
</dbReference>
<dbReference type="GO" id="GO:0009951">
    <property type="term" value="P:polarity specification of dorsal/ventral axis"/>
    <property type="evidence" value="ECO:0007669"/>
    <property type="project" value="EnsemblMetazoa"/>
</dbReference>
<dbReference type="GO" id="GO:0007317">
    <property type="term" value="P:regulation of pole plasm oskar mRNA localization"/>
    <property type="evidence" value="ECO:0007669"/>
    <property type="project" value="EnsemblMetazoa"/>
</dbReference>
<dbReference type="GO" id="GO:0140965">
    <property type="term" value="P:secondary piRNA processing"/>
    <property type="evidence" value="ECO:0007669"/>
    <property type="project" value="EnsemblMetazoa"/>
</dbReference>
<dbReference type="GO" id="GO:0007283">
    <property type="term" value="P:spermatogenesis"/>
    <property type="evidence" value="ECO:0007669"/>
    <property type="project" value="UniProtKB-KW"/>
</dbReference>
<dbReference type="GO" id="GO:0141009">
    <property type="term" value="P:transposable element silencing by piRNA-mediated mRNA destabilization"/>
    <property type="evidence" value="ECO:0007669"/>
    <property type="project" value="EnsemblMetazoa"/>
</dbReference>
<dbReference type="CDD" id="cd17988">
    <property type="entry name" value="DEXHc_TDRD9"/>
    <property type="match status" value="1"/>
</dbReference>
<dbReference type="CDD" id="cd18791">
    <property type="entry name" value="SF2_C_RHA"/>
    <property type="match status" value="1"/>
</dbReference>
<dbReference type="FunFam" id="3.40.50.300:FF:001676">
    <property type="entry name" value="DExH-box ATP-dependent RNA helicase DExH7 chloroplastic"/>
    <property type="match status" value="1"/>
</dbReference>
<dbReference type="Gene3D" id="1.20.120.1080">
    <property type="match status" value="1"/>
</dbReference>
<dbReference type="Gene3D" id="2.30.30.140">
    <property type="match status" value="1"/>
</dbReference>
<dbReference type="Gene3D" id="2.40.50.90">
    <property type="match status" value="1"/>
</dbReference>
<dbReference type="Gene3D" id="3.40.50.300">
    <property type="entry name" value="P-loop containing nucleotide triphosphate hydrolases"/>
    <property type="match status" value="2"/>
</dbReference>
<dbReference type="InterPro" id="IPR011545">
    <property type="entry name" value="DEAD/DEAH_box_helicase_dom"/>
</dbReference>
<dbReference type="InterPro" id="IPR007502">
    <property type="entry name" value="Helicase-assoc_dom"/>
</dbReference>
<dbReference type="InterPro" id="IPR014001">
    <property type="entry name" value="Helicase_ATP-bd"/>
</dbReference>
<dbReference type="InterPro" id="IPR001650">
    <property type="entry name" value="Helicase_C-like"/>
</dbReference>
<dbReference type="InterPro" id="IPR027417">
    <property type="entry name" value="P-loop_NTPase"/>
</dbReference>
<dbReference type="InterPro" id="IPR035437">
    <property type="entry name" value="SNase_OB-fold_sf"/>
</dbReference>
<dbReference type="InterPro" id="IPR002999">
    <property type="entry name" value="Tudor"/>
</dbReference>
<dbReference type="InterPro" id="IPR013087">
    <property type="entry name" value="Znf_C2H2_type"/>
</dbReference>
<dbReference type="PANTHER" id="PTHR18934">
    <property type="entry name" value="ATP-DEPENDENT RNA HELICASE"/>
    <property type="match status" value="1"/>
</dbReference>
<dbReference type="PANTHER" id="PTHR18934:SF113">
    <property type="entry name" value="ATP-DEPENDENT RNA HELICASE TDRD9"/>
    <property type="match status" value="1"/>
</dbReference>
<dbReference type="Pfam" id="PF00270">
    <property type="entry name" value="DEAD"/>
    <property type="match status" value="1"/>
</dbReference>
<dbReference type="Pfam" id="PF00271">
    <property type="entry name" value="Helicase_C"/>
    <property type="match status" value="1"/>
</dbReference>
<dbReference type="Pfam" id="PF00567">
    <property type="entry name" value="TUDOR"/>
    <property type="match status" value="1"/>
</dbReference>
<dbReference type="SMART" id="SM00487">
    <property type="entry name" value="DEXDc"/>
    <property type="match status" value="1"/>
</dbReference>
<dbReference type="SMART" id="SM00847">
    <property type="entry name" value="HA2"/>
    <property type="match status" value="1"/>
</dbReference>
<dbReference type="SMART" id="SM00490">
    <property type="entry name" value="HELICc"/>
    <property type="match status" value="1"/>
</dbReference>
<dbReference type="SMART" id="SM00333">
    <property type="entry name" value="TUDOR"/>
    <property type="match status" value="1"/>
</dbReference>
<dbReference type="SUPFAM" id="SSF52540">
    <property type="entry name" value="P-loop containing nucleoside triphosphate hydrolases"/>
    <property type="match status" value="1"/>
</dbReference>
<dbReference type="SUPFAM" id="SSF63748">
    <property type="entry name" value="Tudor/PWWP/MBT"/>
    <property type="match status" value="1"/>
</dbReference>
<dbReference type="PROSITE" id="PS51192">
    <property type="entry name" value="HELICASE_ATP_BIND_1"/>
    <property type="match status" value="1"/>
</dbReference>
<dbReference type="PROSITE" id="PS51194">
    <property type="entry name" value="HELICASE_CTER"/>
    <property type="match status" value="1"/>
</dbReference>
<dbReference type="PROSITE" id="PS50304">
    <property type="entry name" value="TUDOR"/>
    <property type="match status" value="1"/>
</dbReference>
<reference key="1">
    <citation type="journal article" date="2007" name="Nature">
        <title>Evolution of genes and genomes on the Drosophila phylogeny.</title>
        <authorList>
            <consortium name="Drosophila 12 genomes consortium"/>
        </authorList>
    </citation>
    <scope>NUCLEOTIDE SEQUENCE [LARGE SCALE GENOMIC DNA]</scope>
    <source>
        <strain>Tucson 14021-0224.01</strain>
    </source>
</reference>